<name>DACT2_MOUSE</name>
<reference key="1">
    <citation type="journal article" date="2006" name="Dev. Dyn.">
        <title>Three Dact gene family members are expressed during embryonic development and in the adult brains of mice.</title>
        <authorList>
            <person name="Fisher D.A."/>
            <person name="Kivimaee S."/>
            <person name="Hoshino J."/>
            <person name="Suriben R."/>
            <person name="Martin P.-M."/>
            <person name="Baxter N."/>
            <person name="Cheyette B.N.R."/>
        </authorList>
    </citation>
    <scope>NUCLEOTIDE SEQUENCE [MRNA]</scope>
    <scope>DEVELOPMENTAL STAGE</scope>
    <source>
        <strain>CD-1</strain>
        <tissue>Brain cortex</tissue>
    </source>
</reference>
<reference key="2">
    <citation type="journal article" date="2005" name="Science">
        <title>The transcriptional landscape of the mammalian genome.</title>
        <authorList>
            <person name="Carninci P."/>
            <person name="Kasukawa T."/>
            <person name="Katayama S."/>
            <person name="Gough J."/>
            <person name="Frith M.C."/>
            <person name="Maeda N."/>
            <person name="Oyama R."/>
            <person name="Ravasi T."/>
            <person name="Lenhard B."/>
            <person name="Wells C."/>
            <person name="Kodzius R."/>
            <person name="Shimokawa K."/>
            <person name="Bajic V.B."/>
            <person name="Brenner S.E."/>
            <person name="Batalov S."/>
            <person name="Forrest A.R."/>
            <person name="Zavolan M."/>
            <person name="Davis M.J."/>
            <person name="Wilming L.G."/>
            <person name="Aidinis V."/>
            <person name="Allen J.E."/>
            <person name="Ambesi-Impiombato A."/>
            <person name="Apweiler R."/>
            <person name="Aturaliya R.N."/>
            <person name="Bailey T.L."/>
            <person name="Bansal M."/>
            <person name="Baxter L."/>
            <person name="Beisel K.W."/>
            <person name="Bersano T."/>
            <person name="Bono H."/>
            <person name="Chalk A.M."/>
            <person name="Chiu K.P."/>
            <person name="Choudhary V."/>
            <person name="Christoffels A."/>
            <person name="Clutterbuck D.R."/>
            <person name="Crowe M.L."/>
            <person name="Dalla E."/>
            <person name="Dalrymple B.P."/>
            <person name="de Bono B."/>
            <person name="Della Gatta G."/>
            <person name="di Bernardo D."/>
            <person name="Down T."/>
            <person name="Engstrom P."/>
            <person name="Fagiolini M."/>
            <person name="Faulkner G."/>
            <person name="Fletcher C.F."/>
            <person name="Fukushima T."/>
            <person name="Furuno M."/>
            <person name="Futaki S."/>
            <person name="Gariboldi M."/>
            <person name="Georgii-Hemming P."/>
            <person name="Gingeras T.R."/>
            <person name="Gojobori T."/>
            <person name="Green R.E."/>
            <person name="Gustincich S."/>
            <person name="Harbers M."/>
            <person name="Hayashi Y."/>
            <person name="Hensch T.K."/>
            <person name="Hirokawa N."/>
            <person name="Hill D."/>
            <person name="Huminiecki L."/>
            <person name="Iacono M."/>
            <person name="Ikeo K."/>
            <person name="Iwama A."/>
            <person name="Ishikawa T."/>
            <person name="Jakt M."/>
            <person name="Kanapin A."/>
            <person name="Katoh M."/>
            <person name="Kawasawa Y."/>
            <person name="Kelso J."/>
            <person name="Kitamura H."/>
            <person name="Kitano H."/>
            <person name="Kollias G."/>
            <person name="Krishnan S.P."/>
            <person name="Kruger A."/>
            <person name="Kummerfeld S.K."/>
            <person name="Kurochkin I.V."/>
            <person name="Lareau L.F."/>
            <person name="Lazarevic D."/>
            <person name="Lipovich L."/>
            <person name="Liu J."/>
            <person name="Liuni S."/>
            <person name="McWilliam S."/>
            <person name="Madan Babu M."/>
            <person name="Madera M."/>
            <person name="Marchionni L."/>
            <person name="Matsuda H."/>
            <person name="Matsuzawa S."/>
            <person name="Miki H."/>
            <person name="Mignone F."/>
            <person name="Miyake S."/>
            <person name="Morris K."/>
            <person name="Mottagui-Tabar S."/>
            <person name="Mulder N."/>
            <person name="Nakano N."/>
            <person name="Nakauchi H."/>
            <person name="Ng P."/>
            <person name="Nilsson R."/>
            <person name="Nishiguchi S."/>
            <person name="Nishikawa S."/>
            <person name="Nori F."/>
            <person name="Ohara O."/>
            <person name="Okazaki Y."/>
            <person name="Orlando V."/>
            <person name="Pang K.C."/>
            <person name="Pavan W.J."/>
            <person name="Pavesi G."/>
            <person name="Pesole G."/>
            <person name="Petrovsky N."/>
            <person name="Piazza S."/>
            <person name="Reed J."/>
            <person name="Reid J.F."/>
            <person name="Ring B.Z."/>
            <person name="Ringwald M."/>
            <person name="Rost B."/>
            <person name="Ruan Y."/>
            <person name="Salzberg S.L."/>
            <person name="Sandelin A."/>
            <person name="Schneider C."/>
            <person name="Schoenbach C."/>
            <person name="Sekiguchi K."/>
            <person name="Semple C.A."/>
            <person name="Seno S."/>
            <person name="Sessa L."/>
            <person name="Sheng Y."/>
            <person name="Shibata Y."/>
            <person name="Shimada H."/>
            <person name="Shimada K."/>
            <person name="Silva D."/>
            <person name="Sinclair B."/>
            <person name="Sperling S."/>
            <person name="Stupka E."/>
            <person name="Sugiura K."/>
            <person name="Sultana R."/>
            <person name="Takenaka Y."/>
            <person name="Taki K."/>
            <person name="Tammoja K."/>
            <person name="Tan S.L."/>
            <person name="Tang S."/>
            <person name="Taylor M.S."/>
            <person name="Tegner J."/>
            <person name="Teichmann S.A."/>
            <person name="Ueda H.R."/>
            <person name="van Nimwegen E."/>
            <person name="Verardo R."/>
            <person name="Wei C.L."/>
            <person name="Yagi K."/>
            <person name="Yamanishi H."/>
            <person name="Zabarovsky E."/>
            <person name="Zhu S."/>
            <person name="Zimmer A."/>
            <person name="Hide W."/>
            <person name="Bult C."/>
            <person name="Grimmond S.M."/>
            <person name="Teasdale R.D."/>
            <person name="Liu E.T."/>
            <person name="Brusic V."/>
            <person name="Quackenbush J."/>
            <person name="Wahlestedt C."/>
            <person name="Mattick J.S."/>
            <person name="Hume D.A."/>
            <person name="Kai C."/>
            <person name="Sasaki D."/>
            <person name="Tomaru Y."/>
            <person name="Fukuda S."/>
            <person name="Kanamori-Katayama M."/>
            <person name="Suzuki M."/>
            <person name="Aoki J."/>
            <person name="Arakawa T."/>
            <person name="Iida J."/>
            <person name="Imamura K."/>
            <person name="Itoh M."/>
            <person name="Kato T."/>
            <person name="Kawaji H."/>
            <person name="Kawagashira N."/>
            <person name="Kawashima T."/>
            <person name="Kojima M."/>
            <person name="Kondo S."/>
            <person name="Konno H."/>
            <person name="Nakano K."/>
            <person name="Ninomiya N."/>
            <person name="Nishio T."/>
            <person name="Okada M."/>
            <person name="Plessy C."/>
            <person name="Shibata K."/>
            <person name="Shiraki T."/>
            <person name="Suzuki S."/>
            <person name="Tagami M."/>
            <person name="Waki K."/>
            <person name="Watahiki A."/>
            <person name="Okamura-Oho Y."/>
            <person name="Suzuki H."/>
            <person name="Kawai J."/>
            <person name="Hayashizaki Y."/>
        </authorList>
    </citation>
    <scope>NUCLEOTIDE SEQUENCE [LARGE SCALE MRNA]</scope>
    <source>
        <strain>C57BL/6J</strain>
        <tissue>Thymus</tissue>
    </source>
</reference>
<reference key="3">
    <citation type="journal article" date="2004" name="Genome Res.">
        <title>The status, quality, and expansion of the NIH full-length cDNA project: the Mammalian Gene Collection (MGC).</title>
        <authorList>
            <consortium name="The MGC Project Team"/>
        </authorList>
    </citation>
    <scope>NUCLEOTIDE SEQUENCE [LARGE SCALE MRNA]</scope>
    <source>
        <tissue>Olfactory epithelium</tissue>
    </source>
</reference>
<reference key="4">
    <citation type="journal article" date="2007" name="FASEB J.">
        <title>The evolutionally conserved activity of Dapper2 in antagonizing TGF-beta signaling.</title>
        <authorList>
            <person name="Su Y."/>
            <person name="Zhang L."/>
            <person name="Gao X."/>
            <person name="Meng F."/>
            <person name="Wen J."/>
            <person name="Zhou H."/>
            <person name="Meng A."/>
            <person name="Chen Y.-G."/>
        </authorList>
    </citation>
    <scope>FUNCTION</scope>
    <scope>INTERACTION WITH TGFBR1</scope>
    <scope>DEVELOPMENTAL STAGE</scope>
</reference>
<reference key="5">
    <citation type="journal article" date="2008" name="J. Cell Sci.">
        <title>Accelerated re-epithelialization in Dpr2-deficient mice is associated with enhanced response to TGFbeta signaling.</title>
        <authorList>
            <person name="Meng F."/>
            <person name="Cheng X."/>
            <person name="Yang L."/>
            <person name="Hou N."/>
            <person name="Yang X."/>
            <person name="Meng A."/>
        </authorList>
    </citation>
    <scope>FUNCTION</scope>
    <scope>TISSUE SPECIFICITY</scope>
</reference>
<reference key="6">
    <citation type="journal article" date="2010" name="Am. J. Physiol.">
        <title>Dact2 is expressed in the developing ureteric bud/collecting duct system of the kidney and controls morphogenetic behavior of collecting duct cells.</title>
        <authorList>
            <person name="Lee W.C."/>
            <person name="Hough M.T."/>
            <person name="Liu W."/>
            <person name="Ekiert R."/>
            <person name="Lindstrom N.O."/>
            <person name="Hohenstein P."/>
            <person name="Davies J.A."/>
        </authorList>
    </citation>
    <scope>FUNCTION</scope>
    <scope>DEVELOPMENTAL STAGE</scope>
    <scope>TISSUE SPECIFICITY</scope>
</reference>
<reference key="7">
    <citation type="journal article" date="2011" name="BMC Biochem.">
        <title>All Dact (Dapper/Frodo) scaffold proteins dimerize and exhibit conserved interactions with Vangl, Dvl, and serine/threonine kinases.</title>
        <authorList>
            <person name="Kivimae S."/>
            <person name="Yang X.Y."/>
            <person name="Cheyette B.N."/>
        </authorList>
    </citation>
    <scope>PHOSPHORYLATION</scope>
    <scope>SELF-ASSOCIATION</scope>
    <scope>INTERACTION WITH DACT1; DACT3; CSNK1D; PKA; PKC; CSNK2B; DVL1; DVL2; DVL3; VANGL1; VANGL2; TGFBR1; CTNNB1; CTNND2; CTNND1; LEF1; TCF7; TCF7L1 AND HDAC1</scope>
</reference>
<keyword id="KW-0175">Coiled coil</keyword>
<keyword id="KW-0217">Developmental protein</keyword>
<keyword id="KW-0597">Phosphoprotein</keyword>
<keyword id="KW-1185">Reference proteome</keyword>
<feature type="chain" id="PRO_0000326200" description="Dapper homolog 2">
    <location>
        <begin position="1"/>
        <end position="757"/>
    </location>
</feature>
<feature type="region of interest" description="Inhibition of Nodal signaling">
    <location>
        <begin position="1"/>
        <end position="281"/>
    </location>
</feature>
<feature type="region of interest" description="Disordered" evidence="3">
    <location>
        <begin position="486"/>
        <end position="540"/>
    </location>
</feature>
<feature type="region of interest" description="Disordered" evidence="3">
    <location>
        <begin position="584"/>
        <end position="684"/>
    </location>
</feature>
<feature type="region of interest" description="Disordered" evidence="3">
    <location>
        <begin position="696"/>
        <end position="728"/>
    </location>
</feature>
<feature type="coiled-coil region" evidence="2">
    <location>
        <begin position="55"/>
        <end position="107"/>
    </location>
</feature>
<feature type="short sequence motif" description="PDZ-binding" evidence="1">
    <location>
        <begin position="754"/>
        <end position="757"/>
    </location>
</feature>
<feature type="compositionally biased region" description="Basic and acidic residues" evidence="3">
    <location>
        <begin position="505"/>
        <end position="516"/>
    </location>
</feature>
<feature type="compositionally biased region" description="Basic and acidic residues" evidence="3">
    <location>
        <begin position="631"/>
        <end position="644"/>
    </location>
</feature>
<feature type="compositionally biased region" description="Polar residues" evidence="3">
    <location>
        <begin position="645"/>
        <end position="656"/>
    </location>
</feature>
<feature type="compositionally biased region" description="Basic and acidic residues" evidence="3">
    <location>
        <begin position="664"/>
        <end position="673"/>
    </location>
</feature>
<feature type="sequence conflict" description="In Ref. 1; AAP57185." evidence="9" ref="1">
    <original>S</original>
    <variation>P</variation>
    <location>
        <position position="640"/>
    </location>
</feature>
<feature type="sequence conflict" description="In Ref. 1; AAP57185." evidence="9" ref="1">
    <original>T</original>
    <variation>A</variation>
    <location>
        <position position="647"/>
    </location>
</feature>
<feature type="sequence conflict" description="In Ref. 1; AAP57185." evidence="9" ref="1">
    <original>S</original>
    <variation>G</variation>
    <location>
        <position position="687"/>
    </location>
</feature>
<protein>
    <recommendedName>
        <fullName>Dapper homolog 2</fullName>
        <shortName>mDpr2</shortName>
    </recommendedName>
    <alternativeName>
        <fullName>Dapper antagonist of catenin 2</fullName>
    </alternativeName>
</protein>
<comment type="function">
    <text evidence="5 6 7">Involved in regulation of intracellular signaling pathways during development. Negatively regulates the Nodal signaling pathway, possibly by promoting the lysosomal degradation of Nodal receptors, such as TGFBR1. May be involved in control of the morphogenetic behavior of kidney ureteric bud cells by keeping cells epithelial and restraining their mesenchymal character. May play an inhibitory role in the re-epithelialization of skin wounds by attenuating TGF-beta signaling.</text>
</comment>
<comment type="subunit">
    <text evidence="5 8">Can form homodimers and heterodimers with DACT1 or DACT3. Interacts with CSNK1D, PKA catalytic subunit, PKC-type kinase, CSNK2B, DVL1, DVL2, DVL3, VANGL1, VANGL2, TGFBR1, CTNNB1, CTNND2, CTNND1, LEF1, TCF7, TCF7L1 and HDAC1.</text>
</comment>
<comment type="interaction">
    <interactant intactId="EBI-6392494">
        <id>Q7TN08</id>
    </interactant>
    <interactant intactId="EBI-6392520">
        <id>Q0PHV7</id>
        <label>Dact3</label>
    </interactant>
    <organismsDiffer>false</organismsDiffer>
    <experiments>2</experiments>
</comment>
<comment type="tissue specificity">
    <text evidence="6 7">Expressed in kidney (inner medullary collecting duct). Expressed in epidermal keratinocytes and hair follicles.</text>
</comment>
<comment type="developmental stage">
    <text evidence="4 5 7">Expressed throughout the epiblast at the onset of gastrulation and in somites, the neural tube and gut at later stages of development. In the developing kidney is expressed in the ureteric bud/collecting duct epithelium.</text>
</comment>
<comment type="domain">
    <text evidence="1">The C-terminal PDZ-binding motif may mediate interaction with the PDZ domains of DSH (Dishevelled) family proteins.</text>
</comment>
<comment type="miscellaneous">
    <text>Involved in non-canonical Wnt signaling only when massively overexpressed.</text>
</comment>
<comment type="similarity">
    <text evidence="9">Belongs to the dapper family.</text>
</comment>
<comment type="sequence caution" evidence="9">
    <conflict type="frameshift">
        <sequence resource="EMBL-CDS" id="BAC31003"/>
    </conflict>
</comment>
<evidence type="ECO:0000250" key="1"/>
<evidence type="ECO:0000255" key="2"/>
<evidence type="ECO:0000256" key="3">
    <source>
        <dbReference type="SAM" id="MobiDB-lite"/>
    </source>
</evidence>
<evidence type="ECO:0000269" key="4">
    <source>
    </source>
</evidence>
<evidence type="ECO:0000269" key="5">
    <source>
    </source>
</evidence>
<evidence type="ECO:0000269" key="6">
    <source>
    </source>
</evidence>
<evidence type="ECO:0000269" key="7">
    <source>
    </source>
</evidence>
<evidence type="ECO:0000269" key="8">
    <source>
    </source>
</evidence>
<evidence type="ECO:0000305" key="9"/>
<dbReference type="EMBL" id="AY297430">
    <property type="protein sequence ID" value="AAP57185.1"/>
    <property type="molecule type" value="mRNA"/>
</dbReference>
<dbReference type="EMBL" id="AK041604">
    <property type="protein sequence ID" value="BAC31003.1"/>
    <property type="status" value="ALT_FRAME"/>
    <property type="molecule type" value="mRNA"/>
</dbReference>
<dbReference type="EMBL" id="BC058740">
    <property type="protein sequence ID" value="AAH58740.1"/>
    <property type="molecule type" value="mRNA"/>
</dbReference>
<dbReference type="CCDS" id="CCDS28406.1"/>
<dbReference type="RefSeq" id="NP_766414.3">
    <property type="nucleotide sequence ID" value="NM_172826.3"/>
</dbReference>
<dbReference type="FunCoup" id="Q7TN08">
    <property type="interactions" value="700"/>
</dbReference>
<dbReference type="IntAct" id="Q7TN08">
    <property type="interactions" value="24"/>
</dbReference>
<dbReference type="STRING" id="10090.ENSMUSP00000051638"/>
<dbReference type="iPTMnet" id="Q7TN08"/>
<dbReference type="PhosphoSitePlus" id="Q7TN08"/>
<dbReference type="PaxDb" id="10090-ENSMUSP00000051638"/>
<dbReference type="ProteomicsDB" id="279274"/>
<dbReference type="Antibodypedia" id="33560">
    <property type="antibodies" value="65 antibodies from 22 providers"/>
</dbReference>
<dbReference type="DNASU" id="240025"/>
<dbReference type="Ensembl" id="ENSMUST00000053218.7">
    <property type="protein sequence ID" value="ENSMUSP00000051638.6"/>
    <property type="gene ID" value="ENSMUSG00000048826.8"/>
</dbReference>
<dbReference type="GeneID" id="240025"/>
<dbReference type="KEGG" id="mmu:240025"/>
<dbReference type="UCSC" id="uc008amv.2">
    <property type="organism name" value="mouse"/>
</dbReference>
<dbReference type="AGR" id="MGI:1920347"/>
<dbReference type="CTD" id="168002"/>
<dbReference type="MGI" id="MGI:1920347">
    <property type="gene designation" value="Dact2"/>
</dbReference>
<dbReference type="VEuPathDB" id="HostDB:ENSMUSG00000048826"/>
<dbReference type="eggNOG" id="ENOG502QVT3">
    <property type="taxonomic scope" value="Eukaryota"/>
</dbReference>
<dbReference type="GeneTree" id="ENSGT00950000183181"/>
<dbReference type="HOGENOM" id="CLU_021211_0_0_1"/>
<dbReference type="InParanoid" id="Q7TN08"/>
<dbReference type="OMA" id="GNDVYPY"/>
<dbReference type="OrthoDB" id="9950432at2759"/>
<dbReference type="PhylomeDB" id="Q7TN08"/>
<dbReference type="TreeFam" id="TF331300"/>
<dbReference type="BioGRID-ORCS" id="240025">
    <property type="hits" value="5 hits in 79 CRISPR screens"/>
</dbReference>
<dbReference type="ChiTaRS" id="Dact2">
    <property type="organism name" value="mouse"/>
</dbReference>
<dbReference type="PRO" id="PR:Q7TN08"/>
<dbReference type="Proteomes" id="UP000000589">
    <property type="component" value="Chromosome 17"/>
</dbReference>
<dbReference type="RNAct" id="Q7TN08">
    <property type="molecule type" value="protein"/>
</dbReference>
<dbReference type="Bgee" id="ENSMUSG00000048826">
    <property type="expression patterns" value="Expressed in renal pelvis and 201 other cell types or tissues"/>
</dbReference>
<dbReference type="ExpressionAtlas" id="Q7TN08">
    <property type="expression patterns" value="baseline and differential"/>
</dbReference>
<dbReference type="GO" id="GO:0005739">
    <property type="term" value="C:mitochondrion"/>
    <property type="evidence" value="ECO:0007005"/>
    <property type="project" value="MGI"/>
</dbReference>
<dbReference type="GO" id="GO:0008013">
    <property type="term" value="F:beta-catenin binding"/>
    <property type="evidence" value="ECO:0000314"/>
    <property type="project" value="UniProtKB"/>
</dbReference>
<dbReference type="GO" id="GO:0070097">
    <property type="term" value="F:delta-catenin binding"/>
    <property type="evidence" value="ECO:0000314"/>
    <property type="project" value="UniProtKB"/>
</dbReference>
<dbReference type="GO" id="GO:0051018">
    <property type="term" value="F:protein kinase A binding"/>
    <property type="evidence" value="ECO:0000314"/>
    <property type="project" value="UniProtKB"/>
</dbReference>
<dbReference type="GO" id="GO:0005080">
    <property type="term" value="F:protein kinase C binding"/>
    <property type="evidence" value="ECO:0000314"/>
    <property type="project" value="UniProtKB"/>
</dbReference>
<dbReference type="GO" id="GO:0008134">
    <property type="term" value="F:transcription factor binding"/>
    <property type="evidence" value="ECO:0000314"/>
    <property type="project" value="UniProtKB"/>
</dbReference>
<dbReference type="GO" id="GO:0003382">
    <property type="term" value="P:epithelial cell morphogenesis"/>
    <property type="evidence" value="ECO:0000315"/>
    <property type="project" value="UniProtKB"/>
</dbReference>
<dbReference type="GO" id="GO:0002244">
    <property type="term" value="P:hematopoietic progenitor cell differentiation"/>
    <property type="evidence" value="ECO:0000316"/>
    <property type="project" value="MGI"/>
</dbReference>
<dbReference type="GO" id="GO:0072061">
    <property type="term" value="P:inner medullary collecting duct development"/>
    <property type="evidence" value="ECO:0000315"/>
    <property type="project" value="UniProtKB"/>
</dbReference>
<dbReference type="GO" id="GO:0007162">
    <property type="term" value="P:negative regulation of cell adhesion"/>
    <property type="evidence" value="ECO:0000315"/>
    <property type="project" value="UniProtKB"/>
</dbReference>
<dbReference type="GO" id="GO:1900108">
    <property type="term" value="P:negative regulation of nodal signaling pathway"/>
    <property type="evidence" value="ECO:0000314"/>
    <property type="project" value="UniProtKB"/>
</dbReference>
<dbReference type="GO" id="GO:0043588">
    <property type="term" value="P:skin development"/>
    <property type="evidence" value="ECO:0000315"/>
    <property type="project" value="UniProtKB"/>
</dbReference>
<dbReference type="InterPro" id="IPR024843">
    <property type="entry name" value="Dapper"/>
</dbReference>
<dbReference type="PANTHER" id="PTHR15919:SF13">
    <property type="entry name" value="DAPPER HOMOLOG 2"/>
    <property type="match status" value="1"/>
</dbReference>
<dbReference type="PANTHER" id="PTHR15919">
    <property type="entry name" value="DAPPER-RELATED"/>
    <property type="match status" value="1"/>
</dbReference>
<dbReference type="Pfam" id="PF15268">
    <property type="entry name" value="Dapper"/>
    <property type="match status" value="1"/>
</dbReference>
<organism>
    <name type="scientific">Mus musculus</name>
    <name type="common">Mouse</name>
    <dbReference type="NCBI Taxonomy" id="10090"/>
    <lineage>
        <taxon>Eukaryota</taxon>
        <taxon>Metazoa</taxon>
        <taxon>Chordata</taxon>
        <taxon>Craniata</taxon>
        <taxon>Vertebrata</taxon>
        <taxon>Euteleostomi</taxon>
        <taxon>Mammalia</taxon>
        <taxon>Eutheria</taxon>
        <taxon>Euarchontoglires</taxon>
        <taxon>Glires</taxon>
        <taxon>Rodentia</taxon>
        <taxon>Myomorpha</taxon>
        <taxon>Muroidea</taxon>
        <taxon>Muridae</taxon>
        <taxon>Murinae</taxon>
        <taxon>Mus</taxon>
        <taxon>Mus</taxon>
    </lineage>
</organism>
<accession>Q7TN08</accession>
<accession>Q6PDF4</accession>
<accession>Q8BHZ7</accession>
<proteinExistence type="evidence at protein level"/>
<gene>
    <name type="primary">Dact2</name>
    <name type="synonym">Dpr2</name>
    <name type="synonym">Frd2</name>
</gene>
<sequence length="757" mass="81668">MWAPSGQGPAGWDRRRVGARLRAALAGLQELQGLRATQQARVRGALGLHPAPGPRGQELRLEAALTALREQLSRLRRQDAGLKTHLDQLDQQISELQLDVSRSSCEALDSDSRPSSGFYELSDAGSCSLSTSCASVCSDRLSPSLGSWLPVFQPSKSRSGIGDWRPRSADETTVPAWSPQLTEDSRLLHGAEGTGRLTGMFRPRPVSTGDLERVLPADVGLQRAGTDAAHLLGQGIEIPAHALDPTYQRDLVARGGQEVYPYPSPLHAVALQSPLFALPKEAPCFDICSPPQEPPLVPVDENRTQPEPIRELGSAEAYIHRLLHLRGQELPLRDVGQEQGGDTAAFPPKPCGQRSESTCQLEKQACGADRGGLKLGRGAAKDSLKQHGPVSLVGAEPLSSPLKEETIPWNPCVHGDNTVGSSPCSQAQQPLNDCGQGPVLSPSRVLGTESPPLAPEPFAYTSCTTGETSPVKLRMGFSQNKAVKVRRRVSEKVPRLGKQLPPQPERQRVTERDPSRPHQGGLSRRPTLAREPPGRSCSESTLYPVPFLVPVVVAQRESYPTSPQAFFPMEAALLSSAARRKQRRWQSTMEISAKAGSVSQPGPSMGLPRSPAKRGSGPRAQSRPTLARQDACARCESDPSEHSADCTSLYHSTIAETSEDEEASDHTANRFGDESSSNDSEGCFRGSRRRLAIGSAEAGQGGWAWPRVPPQQPSRAPGNTRPPLPPVPKLCRIKASKALKKKIRRFQPAALKVMTMV</sequence>